<keyword id="KW-0963">Cytoplasm</keyword>
<keyword id="KW-0413">Isomerase</keyword>
<keyword id="KW-0627">Porphyrin biosynthesis</keyword>
<keyword id="KW-0663">Pyridoxal phosphate</keyword>
<keyword id="KW-1185">Reference proteome</keyword>
<name>GSA_CELJU</name>
<gene>
    <name evidence="1" type="primary">hemL</name>
    <name type="ordered locus">CJA_0880</name>
</gene>
<protein>
    <recommendedName>
        <fullName evidence="1">Glutamate-1-semialdehyde 2,1-aminomutase</fullName>
        <shortName evidence="1">GSA</shortName>
        <ecNumber evidence="1">5.4.3.8</ecNumber>
    </recommendedName>
    <alternativeName>
        <fullName evidence="1">Glutamate-1-semialdehyde aminotransferase</fullName>
        <shortName evidence="1">GSA-AT</shortName>
    </alternativeName>
</protein>
<accession>B3PL68</accession>
<reference key="1">
    <citation type="journal article" date="2008" name="J. Bacteriol.">
        <title>Insights into plant cell wall degradation from the genome sequence of the soil bacterium Cellvibrio japonicus.</title>
        <authorList>
            <person name="DeBoy R.T."/>
            <person name="Mongodin E.F."/>
            <person name="Fouts D.E."/>
            <person name="Tailford L.E."/>
            <person name="Khouri H."/>
            <person name="Emerson J.B."/>
            <person name="Mohamoud Y."/>
            <person name="Watkins K."/>
            <person name="Henrissat B."/>
            <person name="Gilbert H.J."/>
            <person name="Nelson K.E."/>
        </authorList>
    </citation>
    <scope>NUCLEOTIDE SEQUENCE [LARGE SCALE GENOMIC DNA]</scope>
    <source>
        <strain>Ueda107</strain>
    </source>
</reference>
<comment type="catalytic activity">
    <reaction evidence="1">
        <text>(S)-4-amino-5-oxopentanoate = 5-aminolevulinate</text>
        <dbReference type="Rhea" id="RHEA:14265"/>
        <dbReference type="ChEBI" id="CHEBI:57501"/>
        <dbReference type="ChEBI" id="CHEBI:356416"/>
        <dbReference type="EC" id="5.4.3.8"/>
    </reaction>
</comment>
<comment type="cofactor">
    <cofactor evidence="1">
        <name>pyridoxal 5'-phosphate</name>
        <dbReference type="ChEBI" id="CHEBI:597326"/>
    </cofactor>
</comment>
<comment type="pathway">
    <text evidence="1">Porphyrin-containing compound metabolism; protoporphyrin-IX biosynthesis; 5-aminolevulinate from L-glutamyl-tRNA(Glu): step 2/2.</text>
</comment>
<comment type="subunit">
    <text evidence="1">Homodimer.</text>
</comment>
<comment type="subcellular location">
    <subcellularLocation>
        <location evidence="1">Cytoplasm</location>
    </subcellularLocation>
</comment>
<comment type="similarity">
    <text evidence="1">Belongs to the class-III pyridoxal-phosphate-dependent aminotransferase family. HemL subfamily.</text>
</comment>
<feature type="chain" id="PRO_0000382290" description="Glutamate-1-semialdehyde 2,1-aminomutase">
    <location>
        <begin position="1"/>
        <end position="426"/>
    </location>
</feature>
<feature type="modified residue" description="N6-(pyridoxal phosphate)lysine" evidence="1">
    <location>
        <position position="265"/>
    </location>
</feature>
<dbReference type="EC" id="5.4.3.8" evidence="1"/>
<dbReference type="EMBL" id="CP000934">
    <property type="protein sequence ID" value="ACE84990.1"/>
    <property type="molecule type" value="Genomic_DNA"/>
</dbReference>
<dbReference type="RefSeq" id="WP_012486540.1">
    <property type="nucleotide sequence ID" value="NC_010995.1"/>
</dbReference>
<dbReference type="SMR" id="B3PL68"/>
<dbReference type="STRING" id="498211.CJA_0880"/>
<dbReference type="KEGG" id="cja:CJA_0880"/>
<dbReference type="eggNOG" id="COG0001">
    <property type="taxonomic scope" value="Bacteria"/>
</dbReference>
<dbReference type="HOGENOM" id="CLU_016922_1_5_6"/>
<dbReference type="OrthoDB" id="9801052at2"/>
<dbReference type="UniPathway" id="UPA00251">
    <property type="reaction ID" value="UER00317"/>
</dbReference>
<dbReference type="Proteomes" id="UP000001036">
    <property type="component" value="Chromosome"/>
</dbReference>
<dbReference type="GO" id="GO:0005737">
    <property type="term" value="C:cytoplasm"/>
    <property type="evidence" value="ECO:0007669"/>
    <property type="project" value="UniProtKB-SubCell"/>
</dbReference>
<dbReference type="GO" id="GO:0042286">
    <property type="term" value="F:glutamate-1-semialdehyde 2,1-aminomutase activity"/>
    <property type="evidence" value="ECO:0007669"/>
    <property type="project" value="UniProtKB-UniRule"/>
</dbReference>
<dbReference type="GO" id="GO:0030170">
    <property type="term" value="F:pyridoxal phosphate binding"/>
    <property type="evidence" value="ECO:0007669"/>
    <property type="project" value="InterPro"/>
</dbReference>
<dbReference type="GO" id="GO:0008483">
    <property type="term" value="F:transaminase activity"/>
    <property type="evidence" value="ECO:0007669"/>
    <property type="project" value="InterPro"/>
</dbReference>
<dbReference type="GO" id="GO:0006782">
    <property type="term" value="P:protoporphyrinogen IX biosynthetic process"/>
    <property type="evidence" value="ECO:0007669"/>
    <property type="project" value="UniProtKB-UniRule"/>
</dbReference>
<dbReference type="CDD" id="cd00610">
    <property type="entry name" value="OAT_like"/>
    <property type="match status" value="1"/>
</dbReference>
<dbReference type="FunFam" id="3.40.640.10:FF:000021">
    <property type="entry name" value="Glutamate-1-semialdehyde 2,1-aminomutase"/>
    <property type="match status" value="1"/>
</dbReference>
<dbReference type="Gene3D" id="3.90.1150.10">
    <property type="entry name" value="Aspartate Aminotransferase, domain 1"/>
    <property type="match status" value="1"/>
</dbReference>
<dbReference type="Gene3D" id="3.40.640.10">
    <property type="entry name" value="Type I PLP-dependent aspartate aminotransferase-like (Major domain)"/>
    <property type="match status" value="1"/>
</dbReference>
<dbReference type="HAMAP" id="MF_00375">
    <property type="entry name" value="HemL_aminotrans_3"/>
    <property type="match status" value="1"/>
</dbReference>
<dbReference type="InterPro" id="IPR004639">
    <property type="entry name" value="4pyrrol_synth_GluAld_NH2Trfase"/>
</dbReference>
<dbReference type="InterPro" id="IPR005814">
    <property type="entry name" value="Aminotrans_3"/>
</dbReference>
<dbReference type="InterPro" id="IPR049704">
    <property type="entry name" value="Aminotrans_3_PPA_site"/>
</dbReference>
<dbReference type="InterPro" id="IPR015424">
    <property type="entry name" value="PyrdxlP-dep_Trfase"/>
</dbReference>
<dbReference type="InterPro" id="IPR015421">
    <property type="entry name" value="PyrdxlP-dep_Trfase_major"/>
</dbReference>
<dbReference type="InterPro" id="IPR015422">
    <property type="entry name" value="PyrdxlP-dep_Trfase_small"/>
</dbReference>
<dbReference type="NCBIfam" id="TIGR00713">
    <property type="entry name" value="hemL"/>
    <property type="match status" value="1"/>
</dbReference>
<dbReference type="NCBIfam" id="NF000818">
    <property type="entry name" value="PRK00062.1"/>
    <property type="match status" value="1"/>
</dbReference>
<dbReference type="PANTHER" id="PTHR43713">
    <property type="entry name" value="GLUTAMATE-1-SEMIALDEHYDE 2,1-AMINOMUTASE"/>
    <property type="match status" value="1"/>
</dbReference>
<dbReference type="PANTHER" id="PTHR43713:SF3">
    <property type="entry name" value="GLUTAMATE-1-SEMIALDEHYDE 2,1-AMINOMUTASE 1, CHLOROPLASTIC-RELATED"/>
    <property type="match status" value="1"/>
</dbReference>
<dbReference type="Pfam" id="PF00202">
    <property type="entry name" value="Aminotran_3"/>
    <property type="match status" value="1"/>
</dbReference>
<dbReference type="SUPFAM" id="SSF53383">
    <property type="entry name" value="PLP-dependent transferases"/>
    <property type="match status" value="1"/>
</dbReference>
<dbReference type="PROSITE" id="PS00600">
    <property type="entry name" value="AA_TRANSFER_CLASS_3"/>
    <property type="match status" value="1"/>
</dbReference>
<sequence>MSRSEELFLQAQKHIPGGVNSPVRAFKAVGGTPVFFEKALGAYIWDADGKRYIDYVQSWGPMVLGHAHPEVINTVIDAAKHGLSFGAPTERETTLAEKLCSLMPGMDMVRFVSSGTEATMSAIRLARAFTKRDKIIKFEGCYHGHSDSLLIKAGSGALTLGVPSSPGVPAVLADHTITLDYNNAEQVRECFAELGEQIACIIVEPVVGNMNCVPPVPGFLECLREVCDRYGSVLILDEVMTGFRVSPTGAQGYYGIKADITTLGKVIGGGMPVGAFGGRRDIMQMIAPSGPVYQAGTLSGNPVAMAAGLKTLELLQAPEIYPHLYARTNQLVEGLQTLADKAGIPFTTNHVGSMFGFFFTEEKKVTNFKQVMACDIPRFNKFFHGMLERGIYLAPASYEAGFMSTAHTQGDIDQTLGAAEAVFSSL</sequence>
<organism>
    <name type="scientific">Cellvibrio japonicus (strain Ueda107)</name>
    <name type="common">Pseudomonas fluorescens subsp. cellulosa</name>
    <dbReference type="NCBI Taxonomy" id="498211"/>
    <lineage>
        <taxon>Bacteria</taxon>
        <taxon>Pseudomonadati</taxon>
        <taxon>Pseudomonadota</taxon>
        <taxon>Gammaproteobacteria</taxon>
        <taxon>Cellvibrionales</taxon>
        <taxon>Cellvibrionaceae</taxon>
        <taxon>Cellvibrio</taxon>
    </lineage>
</organism>
<evidence type="ECO:0000255" key="1">
    <source>
        <dbReference type="HAMAP-Rule" id="MF_00375"/>
    </source>
</evidence>
<proteinExistence type="inferred from homology"/>